<evidence type="ECO:0000305" key="1"/>
<name>RR2_SORBI</name>
<feature type="chain" id="PRO_0000352159" description="Small ribosomal subunit protein uS2c">
    <location>
        <begin position="1"/>
        <end position="236"/>
    </location>
</feature>
<sequence length="236" mass="26910">MTRRYWNINLKEMIEAGVHFGHGIKKWNPKMAPYISAKRKGTHITNLARTARFLSEACDLVFDAASQGKSFLIVGTKKRAADLVASAAIRSRCHYVNKKWFSGMLTNWSITKTRLSQFRDLRAEEKMGKFHHLPKRDAAILKRKLSTLQRYLGGIKYMTRLPDIVIVLDQQKEYIALRECAILGIPTISLVDTNCDPDLANISIPANDDTMTSIRLILNKLVFAISEGRSLYIRNR</sequence>
<gene>
    <name type="primary">rps2</name>
</gene>
<geneLocation type="chloroplast"/>
<reference key="1">
    <citation type="journal article" date="2007" name="Theor. Appl. Genet.">
        <title>Complete chloroplast genome sequences of Hordeum vulgare, Sorghum bicolor and Agrostis stolonifera, and comparative analyses with other grass genomes.</title>
        <authorList>
            <person name="Saski C."/>
            <person name="Lee S.-B."/>
            <person name="Fjellheim S."/>
            <person name="Guda C."/>
            <person name="Jansen R.K."/>
            <person name="Luo H."/>
            <person name="Tomkins J."/>
            <person name="Rognli O.A."/>
            <person name="Daniell H."/>
            <person name="Clarke J.L."/>
        </authorList>
    </citation>
    <scope>NUCLEOTIDE SEQUENCE [LARGE SCALE GENOMIC DNA]</scope>
    <source>
        <strain>cv. BTx623</strain>
    </source>
</reference>
<protein>
    <recommendedName>
        <fullName evidence="1">Small ribosomal subunit protein uS2c</fullName>
    </recommendedName>
    <alternativeName>
        <fullName>30S ribosomal protein S2, chloroplastic</fullName>
    </alternativeName>
</protein>
<dbReference type="EMBL" id="EF115542">
    <property type="protein sequence ID" value="ABK79489.1"/>
    <property type="molecule type" value="Genomic_DNA"/>
</dbReference>
<dbReference type="RefSeq" id="XP_002457874.1">
    <property type="nucleotide sequence ID" value="XM_002457829.1"/>
</dbReference>
<dbReference type="RefSeq" id="YP_899400.1">
    <property type="nucleotide sequence ID" value="NC_008602.1"/>
</dbReference>
<dbReference type="SMR" id="A1E9R7"/>
<dbReference type="FunCoup" id="A1E9R7">
    <property type="interactions" value="757"/>
</dbReference>
<dbReference type="STRING" id="4558.A1E9R7"/>
<dbReference type="EnsemblPlants" id="EES02994">
    <property type="protein sequence ID" value="EES02994"/>
    <property type="gene ID" value="SORBI_3003G169300"/>
</dbReference>
<dbReference type="GeneID" id="4549111"/>
<dbReference type="Gramene" id="EES02994">
    <property type="protein sequence ID" value="EES02994"/>
    <property type="gene ID" value="SORBI_3003G169300"/>
</dbReference>
<dbReference type="KEGG" id="sbi:4549111"/>
<dbReference type="eggNOG" id="KOG0832">
    <property type="taxonomic scope" value="Eukaryota"/>
</dbReference>
<dbReference type="HOGENOM" id="CLU_040318_1_2_1"/>
<dbReference type="InParanoid" id="A1E9R7"/>
<dbReference type="OMA" id="MSVTMRQ"/>
<dbReference type="OrthoDB" id="773813at2759"/>
<dbReference type="Proteomes" id="UP000000768">
    <property type="component" value="Chloroplast"/>
</dbReference>
<dbReference type="ExpressionAtlas" id="A1E9R7">
    <property type="expression patterns" value="baseline"/>
</dbReference>
<dbReference type="GO" id="GO:0009507">
    <property type="term" value="C:chloroplast"/>
    <property type="evidence" value="ECO:0007669"/>
    <property type="project" value="UniProtKB-SubCell"/>
</dbReference>
<dbReference type="GO" id="GO:0005763">
    <property type="term" value="C:mitochondrial small ribosomal subunit"/>
    <property type="evidence" value="ECO:0000318"/>
    <property type="project" value="GO_Central"/>
</dbReference>
<dbReference type="GO" id="GO:0003735">
    <property type="term" value="F:structural constituent of ribosome"/>
    <property type="evidence" value="ECO:0000318"/>
    <property type="project" value="GO_Central"/>
</dbReference>
<dbReference type="GO" id="GO:0006412">
    <property type="term" value="P:translation"/>
    <property type="evidence" value="ECO:0007669"/>
    <property type="project" value="UniProtKB-UniRule"/>
</dbReference>
<dbReference type="CDD" id="cd01425">
    <property type="entry name" value="RPS2"/>
    <property type="match status" value="1"/>
</dbReference>
<dbReference type="FunFam" id="1.10.287.610:FF:000001">
    <property type="entry name" value="30S ribosomal protein S2"/>
    <property type="match status" value="1"/>
</dbReference>
<dbReference type="Gene3D" id="3.40.50.10490">
    <property type="entry name" value="Glucose-6-phosphate isomerase like protein, domain 1"/>
    <property type="match status" value="1"/>
</dbReference>
<dbReference type="Gene3D" id="1.10.287.610">
    <property type="entry name" value="Helix hairpin bin"/>
    <property type="match status" value="1"/>
</dbReference>
<dbReference type="HAMAP" id="MF_00291_B">
    <property type="entry name" value="Ribosomal_uS2_B"/>
    <property type="match status" value="1"/>
</dbReference>
<dbReference type="InterPro" id="IPR001865">
    <property type="entry name" value="Ribosomal_uS2"/>
</dbReference>
<dbReference type="InterPro" id="IPR005706">
    <property type="entry name" value="Ribosomal_uS2_bac/mit/plastid"/>
</dbReference>
<dbReference type="InterPro" id="IPR018130">
    <property type="entry name" value="Ribosomal_uS2_CS"/>
</dbReference>
<dbReference type="InterPro" id="IPR023591">
    <property type="entry name" value="Ribosomal_uS2_flav_dom_sf"/>
</dbReference>
<dbReference type="NCBIfam" id="TIGR01011">
    <property type="entry name" value="rpsB_bact"/>
    <property type="match status" value="1"/>
</dbReference>
<dbReference type="PANTHER" id="PTHR12534">
    <property type="entry name" value="30S RIBOSOMAL PROTEIN S2 PROKARYOTIC AND ORGANELLAR"/>
    <property type="match status" value="1"/>
</dbReference>
<dbReference type="PANTHER" id="PTHR12534:SF0">
    <property type="entry name" value="SMALL RIBOSOMAL SUBUNIT PROTEIN US2M"/>
    <property type="match status" value="1"/>
</dbReference>
<dbReference type="Pfam" id="PF00318">
    <property type="entry name" value="Ribosomal_S2"/>
    <property type="match status" value="1"/>
</dbReference>
<dbReference type="PRINTS" id="PR00395">
    <property type="entry name" value="RIBOSOMALS2"/>
</dbReference>
<dbReference type="SUPFAM" id="SSF52313">
    <property type="entry name" value="Ribosomal protein S2"/>
    <property type="match status" value="1"/>
</dbReference>
<dbReference type="PROSITE" id="PS00962">
    <property type="entry name" value="RIBOSOMAL_S2_1"/>
    <property type="match status" value="1"/>
</dbReference>
<dbReference type="PROSITE" id="PS00963">
    <property type="entry name" value="RIBOSOMAL_S2_2"/>
    <property type="match status" value="1"/>
</dbReference>
<keyword id="KW-0150">Chloroplast</keyword>
<keyword id="KW-0934">Plastid</keyword>
<keyword id="KW-1185">Reference proteome</keyword>
<keyword id="KW-0687">Ribonucleoprotein</keyword>
<keyword id="KW-0689">Ribosomal protein</keyword>
<proteinExistence type="inferred from homology"/>
<accession>A1E9R7</accession>
<organism>
    <name type="scientific">Sorghum bicolor</name>
    <name type="common">Sorghum</name>
    <name type="synonym">Sorghum vulgare</name>
    <dbReference type="NCBI Taxonomy" id="4558"/>
    <lineage>
        <taxon>Eukaryota</taxon>
        <taxon>Viridiplantae</taxon>
        <taxon>Streptophyta</taxon>
        <taxon>Embryophyta</taxon>
        <taxon>Tracheophyta</taxon>
        <taxon>Spermatophyta</taxon>
        <taxon>Magnoliopsida</taxon>
        <taxon>Liliopsida</taxon>
        <taxon>Poales</taxon>
        <taxon>Poaceae</taxon>
        <taxon>PACMAD clade</taxon>
        <taxon>Panicoideae</taxon>
        <taxon>Andropogonodae</taxon>
        <taxon>Andropogoneae</taxon>
        <taxon>Sorghinae</taxon>
        <taxon>Sorghum</taxon>
    </lineage>
</organism>
<comment type="subcellular location">
    <subcellularLocation>
        <location>Plastid</location>
        <location>Chloroplast</location>
    </subcellularLocation>
</comment>
<comment type="similarity">
    <text evidence="1">Belongs to the universal ribosomal protein uS2 family.</text>
</comment>